<reference key="1">
    <citation type="journal article" date="2001" name="Nature">
        <title>Massive gene decay in the leprosy bacillus.</title>
        <authorList>
            <person name="Cole S.T."/>
            <person name="Eiglmeier K."/>
            <person name="Parkhill J."/>
            <person name="James K.D."/>
            <person name="Thomson N.R."/>
            <person name="Wheeler P.R."/>
            <person name="Honore N."/>
            <person name="Garnier T."/>
            <person name="Churcher C.M."/>
            <person name="Harris D.E."/>
            <person name="Mungall K.L."/>
            <person name="Basham D."/>
            <person name="Brown D."/>
            <person name="Chillingworth T."/>
            <person name="Connor R."/>
            <person name="Davies R.M."/>
            <person name="Devlin K."/>
            <person name="Duthoy S."/>
            <person name="Feltwell T."/>
            <person name="Fraser A."/>
            <person name="Hamlin N."/>
            <person name="Holroyd S."/>
            <person name="Hornsby T."/>
            <person name="Jagels K."/>
            <person name="Lacroix C."/>
            <person name="Maclean J."/>
            <person name="Moule S."/>
            <person name="Murphy L.D."/>
            <person name="Oliver K."/>
            <person name="Quail M.A."/>
            <person name="Rajandream M.A."/>
            <person name="Rutherford K.M."/>
            <person name="Rutter S."/>
            <person name="Seeger K."/>
            <person name="Simon S."/>
            <person name="Simmonds M."/>
            <person name="Skelton J."/>
            <person name="Squares R."/>
            <person name="Squares S."/>
            <person name="Stevens K."/>
            <person name="Taylor K."/>
            <person name="Whitehead S."/>
            <person name="Woodward J.R."/>
            <person name="Barrell B.G."/>
        </authorList>
    </citation>
    <scope>NUCLEOTIDE SEQUENCE [LARGE SCALE GENOMIC DNA]</scope>
    <source>
        <strain>TN</strain>
    </source>
</reference>
<evidence type="ECO:0000255" key="1">
    <source>
        <dbReference type="HAMAP-Rule" id="MF_01698"/>
    </source>
</evidence>
<proteinExistence type="inferred from homology"/>
<protein>
    <recommendedName>
        <fullName evidence="1">Mycothiol acetyltransferase</fullName>
        <shortName evidence="1">MSH acetyltransferase</shortName>
        <ecNumber evidence="1">2.3.1.189</ecNumber>
    </recommendedName>
    <alternativeName>
        <fullName evidence="1">Mycothiol synthase</fullName>
    </alternativeName>
</protein>
<name>MSHD_MYCLE</name>
<accession>Q9CBC9</accession>
<organism>
    <name type="scientific">Mycobacterium leprae (strain TN)</name>
    <dbReference type="NCBI Taxonomy" id="272631"/>
    <lineage>
        <taxon>Bacteria</taxon>
        <taxon>Bacillati</taxon>
        <taxon>Actinomycetota</taxon>
        <taxon>Actinomycetes</taxon>
        <taxon>Mycobacteriales</taxon>
        <taxon>Mycobacteriaceae</taxon>
        <taxon>Mycobacterium</taxon>
    </lineage>
</organism>
<comment type="function">
    <text evidence="1">Catalyzes the transfer of acetyl from acetyl-CoA to desacetylmycothiol (Cys-GlcN-Ins) to form mycothiol.</text>
</comment>
<comment type="catalytic activity">
    <reaction evidence="1">
        <text>1D-myo-inositol 2-(L-cysteinylamino)-2-deoxy-alpha-D-glucopyranoside + acetyl-CoA = mycothiol + CoA + H(+)</text>
        <dbReference type="Rhea" id="RHEA:26172"/>
        <dbReference type="ChEBI" id="CHEBI:15378"/>
        <dbReference type="ChEBI" id="CHEBI:16768"/>
        <dbReference type="ChEBI" id="CHEBI:57287"/>
        <dbReference type="ChEBI" id="CHEBI:57288"/>
        <dbReference type="ChEBI" id="CHEBI:58887"/>
        <dbReference type="EC" id="2.3.1.189"/>
    </reaction>
</comment>
<comment type="subunit">
    <text evidence="1">Monomer.</text>
</comment>
<comment type="similarity">
    <text evidence="1">Belongs to the acetyltransferase family. MshD subfamily.</text>
</comment>
<sequence length="311" mass="33819">MVLNWRFALSADEQRLVREIISAATEFDEVSPVGEQVLRELGYDRTEHLLVTDSRPYAPIIGYLNLSSPRDAGVAMAELVVHPRERRRGVGAAMVRAALAKTGGRNRFWAHGTLASARATASVLGLVPVRELVQMQRSLRTIPDPMVPDQLGVWVRTYVGTVDDAELLRVNNAAFAGHPEQGGWTATQLAERRSEPWFDPAGLFLAFGDSSSNQPGKLLGFHWTKVHAAHPGLGEVYVLGVDPSAQGRGLGQMLTSIGIASLAQRLVGPSAEPTVMLYVESDNVAAARTYERLGFTTYSVDTAYALARIDD</sequence>
<feature type="chain" id="PRO_0000400272" description="Mycothiol acetyltransferase">
    <location>
        <begin position="1"/>
        <end position="311"/>
    </location>
</feature>
<feature type="domain" description="N-acetyltransferase" evidence="1">
    <location>
        <begin position="155"/>
        <end position="311"/>
    </location>
</feature>
<feature type="binding site" evidence="1">
    <location>
        <position position="35"/>
    </location>
    <ligand>
        <name>1D-myo-inositol 2-(L-cysteinylamino)-2-deoxy-alpha-D-glucopyranoside</name>
        <dbReference type="ChEBI" id="CHEBI:58887"/>
    </ligand>
</feature>
<feature type="binding site" evidence="1">
    <location>
        <begin position="79"/>
        <end position="81"/>
    </location>
    <ligand>
        <name>acetyl-CoA</name>
        <dbReference type="ChEBI" id="CHEBI:57288"/>
        <label>1</label>
    </ligand>
</feature>
<feature type="binding site" evidence="1">
    <location>
        <position position="180"/>
    </location>
    <ligand>
        <name>1D-myo-inositol 2-(L-cysteinylamino)-2-deoxy-alpha-D-glucopyranoside</name>
        <dbReference type="ChEBI" id="CHEBI:58887"/>
    </ligand>
</feature>
<feature type="binding site" evidence="1">
    <location>
        <position position="225"/>
    </location>
    <ligand>
        <name>1D-myo-inositol 2-(L-cysteinylamino)-2-deoxy-alpha-D-glucopyranoside</name>
        <dbReference type="ChEBI" id="CHEBI:58887"/>
    </ligand>
</feature>
<feature type="binding site" evidence="1">
    <location>
        <position position="235"/>
    </location>
    <ligand>
        <name>1D-myo-inositol 2-(L-cysteinylamino)-2-deoxy-alpha-D-glucopyranoside</name>
        <dbReference type="ChEBI" id="CHEBI:58887"/>
    </ligand>
</feature>
<feature type="binding site" evidence="1">
    <location>
        <begin position="239"/>
        <end position="241"/>
    </location>
    <ligand>
        <name>acetyl-CoA</name>
        <dbReference type="ChEBI" id="CHEBI:57288"/>
        <label>2</label>
    </ligand>
</feature>
<feature type="binding site" evidence="1">
    <location>
        <begin position="246"/>
        <end position="252"/>
    </location>
    <ligand>
        <name>acetyl-CoA</name>
        <dbReference type="ChEBI" id="CHEBI:57288"/>
        <label>2</label>
    </ligand>
</feature>
<feature type="binding site" evidence="1">
    <location>
        <position position="278"/>
    </location>
    <ligand>
        <name>1D-myo-inositol 2-(L-cysteinylamino)-2-deoxy-alpha-D-glucopyranoside</name>
        <dbReference type="ChEBI" id="CHEBI:58887"/>
    </ligand>
</feature>
<feature type="binding site" evidence="1">
    <location>
        <begin position="283"/>
        <end position="288"/>
    </location>
    <ligand>
        <name>acetyl-CoA</name>
        <dbReference type="ChEBI" id="CHEBI:57288"/>
        <label>2</label>
    </ligand>
</feature>
<keyword id="KW-0012">Acyltransferase</keyword>
<keyword id="KW-1185">Reference proteome</keyword>
<keyword id="KW-0677">Repeat</keyword>
<keyword id="KW-0808">Transferase</keyword>
<dbReference type="EC" id="2.3.1.189" evidence="1"/>
<dbReference type="EMBL" id="AL583924">
    <property type="protein sequence ID" value="CAC31148.1"/>
    <property type="molecule type" value="Genomic_DNA"/>
</dbReference>
<dbReference type="PIR" id="D87183">
    <property type="entry name" value="D87183"/>
</dbReference>
<dbReference type="RefSeq" id="NP_302436.1">
    <property type="nucleotide sequence ID" value="NC_002677.1"/>
</dbReference>
<dbReference type="SMR" id="Q9CBC9"/>
<dbReference type="STRING" id="272631.gene:17576050"/>
<dbReference type="KEGG" id="mle:ML2193"/>
<dbReference type="PATRIC" id="fig|272631.5.peg.4157"/>
<dbReference type="Leproma" id="ML2193"/>
<dbReference type="eggNOG" id="COG0454">
    <property type="taxonomic scope" value="Bacteria"/>
</dbReference>
<dbReference type="eggNOG" id="COG0456">
    <property type="taxonomic scope" value="Bacteria"/>
</dbReference>
<dbReference type="HOGENOM" id="CLU_068014_0_0_11"/>
<dbReference type="OrthoDB" id="3208058at2"/>
<dbReference type="Proteomes" id="UP000000806">
    <property type="component" value="Chromosome"/>
</dbReference>
<dbReference type="GO" id="GO:0035447">
    <property type="term" value="F:mycothiol synthase activity"/>
    <property type="evidence" value="ECO:0007669"/>
    <property type="project" value="UniProtKB-UniRule"/>
</dbReference>
<dbReference type="GO" id="GO:0008999">
    <property type="term" value="F:protein-N-terminal-alanine acetyltransferase activity"/>
    <property type="evidence" value="ECO:0007669"/>
    <property type="project" value="TreeGrafter"/>
</dbReference>
<dbReference type="GO" id="GO:0010125">
    <property type="term" value="P:mycothiol biosynthetic process"/>
    <property type="evidence" value="ECO:0007669"/>
    <property type="project" value="UniProtKB-UniRule"/>
</dbReference>
<dbReference type="CDD" id="cd04301">
    <property type="entry name" value="NAT_SF"/>
    <property type="match status" value="2"/>
</dbReference>
<dbReference type="Gene3D" id="3.40.630.30">
    <property type="match status" value="1"/>
</dbReference>
<dbReference type="HAMAP" id="MF_01698">
    <property type="entry name" value="MshD"/>
    <property type="match status" value="1"/>
</dbReference>
<dbReference type="InterPro" id="IPR016181">
    <property type="entry name" value="Acyl_CoA_acyltransferase"/>
</dbReference>
<dbReference type="InterPro" id="IPR000182">
    <property type="entry name" value="GNAT_dom"/>
</dbReference>
<dbReference type="InterPro" id="IPR050276">
    <property type="entry name" value="MshD_Acetyltransferase"/>
</dbReference>
<dbReference type="InterPro" id="IPR017813">
    <property type="entry name" value="Mycothiol_AcTrfase"/>
</dbReference>
<dbReference type="NCBIfam" id="TIGR03448">
    <property type="entry name" value="mycothiol_MshD"/>
    <property type="match status" value="1"/>
</dbReference>
<dbReference type="PANTHER" id="PTHR43617">
    <property type="entry name" value="L-AMINO ACID N-ACETYLTRANSFERASE"/>
    <property type="match status" value="1"/>
</dbReference>
<dbReference type="PANTHER" id="PTHR43617:SF31">
    <property type="entry name" value="MYCOTHIOL ACETYLTRANSFERASE"/>
    <property type="match status" value="1"/>
</dbReference>
<dbReference type="Pfam" id="PF00583">
    <property type="entry name" value="Acetyltransf_1"/>
    <property type="match status" value="2"/>
</dbReference>
<dbReference type="PIRSF" id="PIRSF021524">
    <property type="entry name" value="MSH_acetyltransferase"/>
    <property type="match status" value="1"/>
</dbReference>
<dbReference type="SUPFAM" id="SSF55729">
    <property type="entry name" value="Acyl-CoA N-acyltransferases (Nat)"/>
    <property type="match status" value="1"/>
</dbReference>
<dbReference type="PROSITE" id="PS51186">
    <property type="entry name" value="GNAT"/>
    <property type="match status" value="1"/>
</dbReference>
<gene>
    <name evidence="1" type="primary">mshD</name>
    <name type="ordered locus">ML2193</name>
</gene>